<feature type="chain" id="PRO_0000408315" description="Serine/threonine-protein kinase greatwall">
    <location>
        <begin position="1"/>
        <end position="883"/>
    </location>
</feature>
<feature type="domain" description="Protein kinase" evidence="3">
    <location>
        <begin position="35"/>
        <end position="839"/>
    </location>
</feature>
<feature type="domain" description="AGC-kinase C-terminal" evidence="4">
    <location>
        <begin position="840"/>
        <end position="883"/>
    </location>
</feature>
<feature type="active site" description="Proton acceptor" evidence="3 5">
    <location>
        <position position="156"/>
    </location>
</feature>
<feature type="binding site" evidence="3">
    <location>
        <begin position="41"/>
        <end position="49"/>
    </location>
    <ligand>
        <name>ATP</name>
        <dbReference type="ChEBI" id="CHEBI:30616"/>
    </ligand>
</feature>
<feature type="binding site" evidence="3">
    <location>
        <position position="62"/>
    </location>
    <ligand>
        <name>ATP</name>
        <dbReference type="ChEBI" id="CHEBI:30616"/>
    </ligand>
</feature>
<feature type="modified residue" description="N-acetylmethionine" evidence="2">
    <location>
        <position position="1"/>
    </location>
</feature>
<feature type="modified residue" description="Phosphothreonine" evidence="2">
    <location>
        <position position="209"/>
    </location>
</feature>
<feature type="modified residue" description="Phosphothreonine" evidence="2">
    <location>
        <position position="224"/>
    </location>
</feature>
<feature type="modified residue" description="Phosphoserine" evidence="2">
    <location>
        <position position="295"/>
    </location>
</feature>
<feature type="modified residue" description="Phosphoserine" evidence="2">
    <location>
        <position position="373"/>
    </location>
</feature>
<feature type="modified residue" description="Phosphoserine" evidence="2">
    <location>
        <position position="456"/>
    </location>
</feature>
<feature type="modified residue" description="Phosphothreonine" evidence="2">
    <location>
        <position position="523"/>
    </location>
</feature>
<feature type="modified residue" description="Phosphoserine" evidence="2">
    <location>
        <position position="555"/>
    </location>
</feature>
<feature type="modified residue" description="Phosphoserine" evidence="2">
    <location>
        <position position="559"/>
    </location>
</feature>
<feature type="modified residue" description="Phosphoserine" evidence="2">
    <location>
        <position position="634"/>
    </location>
</feature>
<feature type="modified residue" description="Phosphoserine" evidence="2">
    <location>
        <position position="661"/>
    </location>
</feature>
<feature type="modified residue" description="Phosphoserine" evidence="2">
    <location>
        <position position="672"/>
    </location>
</feature>
<feature type="modified residue" description="Phosphothreonine" evidence="2">
    <location>
        <position position="726"/>
    </location>
</feature>
<feature type="modified residue" description="Phosphoserine" evidence="2">
    <location>
        <position position="729"/>
    </location>
</feature>
<feature type="modified residue" description="Phosphothreonine; by CDK1" evidence="2">
    <location>
        <position position="745"/>
    </location>
</feature>
<feature type="modified residue" description="Phosphoserine" evidence="2">
    <location>
        <position position="879"/>
    </location>
</feature>
<feature type="modified residue" description="Phosphoserine" evidence="2">
    <location>
        <position position="882"/>
    </location>
</feature>
<comment type="function">
    <text evidence="2">Serine/threonine kinase that plays a key role in M phase by acting as a regulator of mitosis entry and maintenance (By similarity). Acts by promoting the inactivation of protein phosphatase 2A (PP2A) during M phase: does not directly inhibit PP2A but acts by mediating phosphorylation and subsequent activation of ARPP19 and ENSA at 'Ser-62' and 'Ser-67', respectively (By similarity). ARPP19 and ENSA are phosphatase inhibitors that specifically inhibit the PPP2R2D (PR55-delta) subunit of PP2A. Inactivation of PP2A during M phase is essential to keep cyclin-B1-CDK1 activity high (By similarity). Following DNA damage, it is also involved in checkpoint recovery by being inhibited.</text>
</comment>
<comment type="catalytic activity">
    <reaction evidence="2">
        <text>L-seryl-[protein] + ATP = O-phospho-L-seryl-[protein] + ADP + H(+)</text>
        <dbReference type="Rhea" id="RHEA:17989"/>
        <dbReference type="Rhea" id="RHEA-COMP:9863"/>
        <dbReference type="Rhea" id="RHEA-COMP:11604"/>
        <dbReference type="ChEBI" id="CHEBI:15378"/>
        <dbReference type="ChEBI" id="CHEBI:29999"/>
        <dbReference type="ChEBI" id="CHEBI:30616"/>
        <dbReference type="ChEBI" id="CHEBI:83421"/>
        <dbReference type="ChEBI" id="CHEBI:456216"/>
        <dbReference type="EC" id="2.7.11.1"/>
    </reaction>
</comment>
<comment type="catalytic activity">
    <reaction evidence="2">
        <text>L-threonyl-[protein] + ATP = O-phospho-L-threonyl-[protein] + ADP + H(+)</text>
        <dbReference type="Rhea" id="RHEA:46608"/>
        <dbReference type="Rhea" id="RHEA-COMP:11060"/>
        <dbReference type="Rhea" id="RHEA-COMP:11605"/>
        <dbReference type="ChEBI" id="CHEBI:15378"/>
        <dbReference type="ChEBI" id="CHEBI:30013"/>
        <dbReference type="ChEBI" id="CHEBI:30616"/>
        <dbReference type="ChEBI" id="CHEBI:61977"/>
        <dbReference type="ChEBI" id="CHEBI:456216"/>
        <dbReference type="EC" id="2.7.11.1"/>
    </reaction>
</comment>
<comment type="subcellular location">
    <subcellularLocation>
        <location evidence="1">Cytoplasm</location>
        <location evidence="1">Cytoskeleton</location>
        <location evidence="1">Microtubule organizing center</location>
        <location evidence="1">Centrosome</location>
    </subcellularLocation>
    <subcellularLocation>
        <location>Nucleus</location>
    </subcellularLocation>
    <text evidence="1">During interphase is mainly nuclear, upon nuclear envelope breakdown localizes at the cytoplasm and during mitosis at the centrosomes.</text>
</comment>
<comment type="PTM">
    <text evidence="1">Phosphorylation at Thr-745 by CDK1 during M phase activates its kinase activity. Maximum phosphorylation occurs in prometaphase (By similarity).</text>
</comment>
<comment type="similarity">
    <text evidence="6">Belongs to the protein kinase superfamily. AGC Ser/Thr protein kinase family.</text>
</comment>
<reference key="1">
    <citation type="journal article" date="2005" name="Nature">
        <title>Genome sequence, comparative analysis and haplotype structure of the domestic dog.</title>
        <authorList>
            <person name="Lindblad-Toh K."/>
            <person name="Wade C.M."/>
            <person name="Mikkelsen T.S."/>
            <person name="Karlsson E.K."/>
            <person name="Jaffe D.B."/>
            <person name="Kamal M."/>
            <person name="Clamp M."/>
            <person name="Chang J.L."/>
            <person name="Kulbokas E.J. III"/>
            <person name="Zody M.C."/>
            <person name="Mauceli E."/>
            <person name="Xie X."/>
            <person name="Breen M."/>
            <person name="Wayne R.K."/>
            <person name="Ostrander E.A."/>
            <person name="Ponting C.P."/>
            <person name="Galibert F."/>
            <person name="Smith D.R."/>
            <person name="deJong P.J."/>
            <person name="Kirkness E.F."/>
            <person name="Alvarez P."/>
            <person name="Biagi T."/>
            <person name="Brockman W."/>
            <person name="Butler J."/>
            <person name="Chin C.-W."/>
            <person name="Cook A."/>
            <person name="Cuff J."/>
            <person name="Daly M.J."/>
            <person name="DeCaprio D."/>
            <person name="Gnerre S."/>
            <person name="Grabherr M."/>
            <person name="Kellis M."/>
            <person name="Kleber M."/>
            <person name="Bardeleben C."/>
            <person name="Goodstadt L."/>
            <person name="Heger A."/>
            <person name="Hitte C."/>
            <person name="Kim L."/>
            <person name="Koepfli K.-P."/>
            <person name="Parker H.G."/>
            <person name="Pollinger J.P."/>
            <person name="Searle S.M.J."/>
            <person name="Sutter N.B."/>
            <person name="Thomas R."/>
            <person name="Webber C."/>
            <person name="Baldwin J."/>
            <person name="Abebe A."/>
            <person name="Abouelleil A."/>
            <person name="Aftuck L."/>
            <person name="Ait-Zahra M."/>
            <person name="Aldredge T."/>
            <person name="Allen N."/>
            <person name="An P."/>
            <person name="Anderson S."/>
            <person name="Antoine C."/>
            <person name="Arachchi H."/>
            <person name="Aslam A."/>
            <person name="Ayotte L."/>
            <person name="Bachantsang P."/>
            <person name="Barry A."/>
            <person name="Bayul T."/>
            <person name="Benamara M."/>
            <person name="Berlin A."/>
            <person name="Bessette D."/>
            <person name="Blitshteyn B."/>
            <person name="Bloom T."/>
            <person name="Blye J."/>
            <person name="Boguslavskiy L."/>
            <person name="Bonnet C."/>
            <person name="Boukhgalter B."/>
            <person name="Brown A."/>
            <person name="Cahill P."/>
            <person name="Calixte N."/>
            <person name="Camarata J."/>
            <person name="Cheshatsang Y."/>
            <person name="Chu J."/>
            <person name="Citroen M."/>
            <person name="Collymore A."/>
            <person name="Cooke P."/>
            <person name="Dawoe T."/>
            <person name="Daza R."/>
            <person name="Decktor K."/>
            <person name="DeGray S."/>
            <person name="Dhargay N."/>
            <person name="Dooley K."/>
            <person name="Dooley K."/>
            <person name="Dorje P."/>
            <person name="Dorjee K."/>
            <person name="Dorris L."/>
            <person name="Duffey N."/>
            <person name="Dupes A."/>
            <person name="Egbiremolen O."/>
            <person name="Elong R."/>
            <person name="Falk J."/>
            <person name="Farina A."/>
            <person name="Faro S."/>
            <person name="Ferguson D."/>
            <person name="Ferreira P."/>
            <person name="Fisher S."/>
            <person name="FitzGerald M."/>
            <person name="Foley K."/>
            <person name="Foley C."/>
            <person name="Franke A."/>
            <person name="Friedrich D."/>
            <person name="Gage D."/>
            <person name="Garber M."/>
            <person name="Gearin G."/>
            <person name="Giannoukos G."/>
            <person name="Goode T."/>
            <person name="Goyette A."/>
            <person name="Graham J."/>
            <person name="Grandbois E."/>
            <person name="Gyaltsen K."/>
            <person name="Hafez N."/>
            <person name="Hagopian D."/>
            <person name="Hagos B."/>
            <person name="Hall J."/>
            <person name="Healy C."/>
            <person name="Hegarty R."/>
            <person name="Honan T."/>
            <person name="Horn A."/>
            <person name="Houde N."/>
            <person name="Hughes L."/>
            <person name="Hunnicutt L."/>
            <person name="Husby M."/>
            <person name="Jester B."/>
            <person name="Jones C."/>
            <person name="Kamat A."/>
            <person name="Kanga B."/>
            <person name="Kells C."/>
            <person name="Khazanovich D."/>
            <person name="Kieu A.C."/>
            <person name="Kisner P."/>
            <person name="Kumar M."/>
            <person name="Lance K."/>
            <person name="Landers T."/>
            <person name="Lara M."/>
            <person name="Lee W."/>
            <person name="Leger J.-P."/>
            <person name="Lennon N."/>
            <person name="Leuper L."/>
            <person name="LeVine S."/>
            <person name="Liu J."/>
            <person name="Liu X."/>
            <person name="Lokyitsang Y."/>
            <person name="Lokyitsang T."/>
            <person name="Lui A."/>
            <person name="Macdonald J."/>
            <person name="Major J."/>
            <person name="Marabella R."/>
            <person name="Maru K."/>
            <person name="Matthews C."/>
            <person name="McDonough S."/>
            <person name="Mehta T."/>
            <person name="Meldrim J."/>
            <person name="Melnikov A."/>
            <person name="Meneus L."/>
            <person name="Mihalev A."/>
            <person name="Mihova T."/>
            <person name="Miller K."/>
            <person name="Mittelman R."/>
            <person name="Mlenga V."/>
            <person name="Mulrain L."/>
            <person name="Munson G."/>
            <person name="Navidi A."/>
            <person name="Naylor J."/>
            <person name="Nguyen T."/>
            <person name="Nguyen N."/>
            <person name="Nguyen C."/>
            <person name="Nguyen T."/>
            <person name="Nicol R."/>
            <person name="Norbu N."/>
            <person name="Norbu C."/>
            <person name="Novod N."/>
            <person name="Nyima T."/>
            <person name="Olandt P."/>
            <person name="O'Neill B."/>
            <person name="O'Neill K."/>
            <person name="Osman S."/>
            <person name="Oyono L."/>
            <person name="Patti C."/>
            <person name="Perrin D."/>
            <person name="Phunkhang P."/>
            <person name="Pierre F."/>
            <person name="Priest M."/>
            <person name="Rachupka A."/>
            <person name="Raghuraman S."/>
            <person name="Rameau R."/>
            <person name="Ray V."/>
            <person name="Raymond C."/>
            <person name="Rege F."/>
            <person name="Rise C."/>
            <person name="Rogers J."/>
            <person name="Rogov P."/>
            <person name="Sahalie J."/>
            <person name="Settipalli S."/>
            <person name="Sharpe T."/>
            <person name="Shea T."/>
            <person name="Sheehan M."/>
            <person name="Sherpa N."/>
            <person name="Shi J."/>
            <person name="Shih D."/>
            <person name="Sloan J."/>
            <person name="Smith C."/>
            <person name="Sparrow T."/>
            <person name="Stalker J."/>
            <person name="Stange-Thomann N."/>
            <person name="Stavropoulos S."/>
            <person name="Stone C."/>
            <person name="Stone S."/>
            <person name="Sykes S."/>
            <person name="Tchuinga P."/>
            <person name="Tenzing P."/>
            <person name="Tesfaye S."/>
            <person name="Thoulutsang D."/>
            <person name="Thoulutsang Y."/>
            <person name="Topham K."/>
            <person name="Topping I."/>
            <person name="Tsamla T."/>
            <person name="Vassiliev H."/>
            <person name="Venkataraman V."/>
            <person name="Vo A."/>
            <person name="Wangchuk T."/>
            <person name="Wangdi T."/>
            <person name="Weiand M."/>
            <person name="Wilkinson J."/>
            <person name="Wilson A."/>
            <person name="Yadav S."/>
            <person name="Yang S."/>
            <person name="Yang X."/>
            <person name="Young G."/>
            <person name="Yu Q."/>
            <person name="Zainoun J."/>
            <person name="Zembek L."/>
            <person name="Zimmer A."/>
            <person name="Lander E.S."/>
        </authorList>
    </citation>
    <scope>NUCLEOTIDE SEQUENCE [LARGE SCALE GENOMIC DNA]</scope>
    <source>
        <strain>Boxer</strain>
    </source>
</reference>
<protein>
    <recommendedName>
        <fullName>Serine/threonine-protein kinase greatwall</fullName>
        <shortName>GW</shortName>
        <shortName>GWL</shortName>
        <ecNumber evidence="2">2.7.11.1</ecNumber>
    </recommendedName>
    <alternativeName>
        <fullName>Microtubule-associated serine/threonine-protein kinase-like</fullName>
        <shortName>MAST-L</shortName>
    </alternativeName>
</protein>
<dbReference type="EC" id="2.7.11.1" evidence="2"/>
<dbReference type="SMR" id="E2RJI4"/>
<dbReference type="FunCoup" id="E2RJI4">
    <property type="interactions" value="924"/>
</dbReference>
<dbReference type="STRING" id="9615.ENSCAFP00000006520"/>
<dbReference type="PaxDb" id="9612-ENSCAFP00000006520"/>
<dbReference type="eggNOG" id="KOG0606">
    <property type="taxonomic scope" value="Eukaryota"/>
</dbReference>
<dbReference type="InParanoid" id="E2RJI4"/>
<dbReference type="OMA" id="VMKKNEM"/>
<dbReference type="OrthoDB" id="162894at2759"/>
<dbReference type="TreeFam" id="TF313149"/>
<dbReference type="Proteomes" id="UP000002254">
    <property type="component" value="Unplaced"/>
</dbReference>
<dbReference type="Proteomes" id="UP000694429">
    <property type="component" value="Unplaced"/>
</dbReference>
<dbReference type="Proteomes" id="UP000694542">
    <property type="component" value="Unplaced"/>
</dbReference>
<dbReference type="Proteomes" id="UP000805418">
    <property type="component" value="Unplaced"/>
</dbReference>
<dbReference type="GO" id="GO:0005813">
    <property type="term" value="C:centrosome"/>
    <property type="evidence" value="ECO:0000250"/>
    <property type="project" value="UniProtKB"/>
</dbReference>
<dbReference type="GO" id="GO:0032154">
    <property type="term" value="C:cleavage furrow"/>
    <property type="evidence" value="ECO:0000250"/>
    <property type="project" value="UniProtKB"/>
</dbReference>
<dbReference type="GO" id="GO:0005737">
    <property type="term" value="C:cytoplasm"/>
    <property type="evidence" value="ECO:0007669"/>
    <property type="project" value="UniProtKB-KW"/>
</dbReference>
<dbReference type="GO" id="GO:0005634">
    <property type="term" value="C:nucleus"/>
    <property type="evidence" value="ECO:0000250"/>
    <property type="project" value="UniProtKB"/>
</dbReference>
<dbReference type="GO" id="GO:0005524">
    <property type="term" value="F:ATP binding"/>
    <property type="evidence" value="ECO:0007669"/>
    <property type="project" value="UniProtKB-KW"/>
</dbReference>
<dbReference type="GO" id="GO:0051721">
    <property type="term" value="F:protein phosphatase 2A binding"/>
    <property type="evidence" value="ECO:0000250"/>
    <property type="project" value="UniProtKB"/>
</dbReference>
<dbReference type="GO" id="GO:0106310">
    <property type="term" value="F:protein serine kinase activity"/>
    <property type="evidence" value="ECO:0007669"/>
    <property type="project" value="RHEA"/>
</dbReference>
<dbReference type="GO" id="GO:0004674">
    <property type="term" value="F:protein serine/threonine kinase activity"/>
    <property type="evidence" value="ECO:0000250"/>
    <property type="project" value="UniProtKB"/>
</dbReference>
<dbReference type="GO" id="GO:0051301">
    <property type="term" value="P:cell division"/>
    <property type="evidence" value="ECO:0007669"/>
    <property type="project" value="UniProtKB-KW"/>
</dbReference>
<dbReference type="GO" id="GO:0006974">
    <property type="term" value="P:DNA damage response"/>
    <property type="evidence" value="ECO:0000250"/>
    <property type="project" value="UniProtKB"/>
</dbReference>
<dbReference type="GO" id="GO:0000086">
    <property type="term" value="P:G2/M transition of mitotic cell cycle"/>
    <property type="evidence" value="ECO:0000250"/>
    <property type="project" value="UniProtKB"/>
</dbReference>
<dbReference type="GO" id="GO:0035556">
    <property type="term" value="P:intracellular signal transduction"/>
    <property type="evidence" value="ECO:0000318"/>
    <property type="project" value="GO_Central"/>
</dbReference>
<dbReference type="GO" id="GO:0000278">
    <property type="term" value="P:mitotic cell cycle"/>
    <property type="evidence" value="ECO:0000250"/>
    <property type="project" value="UniProtKB"/>
</dbReference>
<dbReference type="FunFam" id="1.10.510.10:FF:000278">
    <property type="entry name" value="serine/threonine-protein kinase greatwall isoform X1"/>
    <property type="match status" value="1"/>
</dbReference>
<dbReference type="FunFam" id="1.10.510.10:FF:001219">
    <property type="entry name" value="serine/threonine-protein kinase greatwall isoform X1"/>
    <property type="match status" value="1"/>
</dbReference>
<dbReference type="FunFam" id="3.30.200.20:FF:000277">
    <property type="entry name" value="serine/threonine-protein kinase greatwall isoform X1"/>
    <property type="match status" value="1"/>
</dbReference>
<dbReference type="Gene3D" id="3.30.200.20">
    <property type="entry name" value="Phosphorylase Kinase, domain 1"/>
    <property type="match status" value="2"/>
</dbReference>
<dbReference type="Gene3D" id="1.10.510.10">
    <property type="entry name" value="Transferase(Phosphotransferase) domain 1"/>
    <property type="match status" value="2"/>
</dbReference>
<dbReference type="InterPro" id="IPR000961">
    <property type="entry name" value="AGC-kinase_C"/>
</dbReference>
<dbReference type="InterPro" id="IPR011009">
    <property type="entry name" value="Kinase-like_dom_sf"/>
</dbReference>
<dbReference type="InterPro" id="IPR000719">
    <property type="entry name" value="Prot_kinase_dom"/>
</dbReference>
<dbReference type="InterPro" id="IPR008271">
    <property type="entry name" value="Ser/Thr_kinase_AS"/>
</dbReference>
<dbReference type="InterPro" id="IPR050236">
    <property type="entry name" value="Ser_Thr_kinase_AGC"/>
</dbReference>
<dbReference type="PANTHER" id="PTHR24356">
    <property type="entry name" value="SERINE/THREONINE-PROTEIN KINASE"/>
    <property type="match status" value="1"/>
</dbReference>
<dbReference type="PANTHER" id="PTHR24356:SF1">
    <property type="entry name" value="SERINE_THREONINE-PROTEIN KINASE GREATWALL"/>
    <property type="match status" value="1"/>
</dbReference>
<dbReference type="Pfam" id="PF00069">
    <property type="entry name" value="Pkinase"/>
    <property type="match status" value="2"/>
</dbReference>
<dbReference type="SMART" id="SM00220">
    <property type="entry name" value="S_TKc"/>
    <property type="match status" value="1"/>
</dbReference>
<dbReference type="SUPFAM" id="SSF56112">
    <property type="entry name" value="Protein kinase-like (PK-like)"/>
    <property type="match status" value="1"/>
</dbReference>
<dbReference type="PROSITE" id="PS51285">
    <property type="entry name" value="AGC_KINASE_CTER"/>
    <property type="match status" value="1"/>
</dbReference>
<dbReference type="PROSITE" id="PS50011">
    <property type="entry name" value="PROTEIN_KINASE_DOM"/>
    <property type="match status" value="1"/>
</dbReference>
<dbReference type="PROSITE" id="PS00108">
    <property type="entry name" value="PROTEIN_KINASE_ST"/>
    <property type="match status" value="1"/>
</dbReference>
<organism>
    <name type="scientific">Canis lupus familiaris</name>
    <name type="common">Dog</name>
    <name type="synonym">Canis familiaris</name>
    <dbReference type="NCBI Taxonomy" id="9615"/>
    <lineage>
        <taxon>Eukaryota</taxon>
        <taxon>Metazoa</taxon>
        <taxon>Chordata</taxon>
        <taxon>Craniata</taxon>
        <taxon>Vertebrata</taxon>
        <taxon>Euteleostomi</taxon>
        <taxon>Mammalia</taxon>
        <taxon>Eutheria</taxon>
        <taxon>Laurasiatheria</taxon>
        <taxon>Carnivora</taxon>
        <taxon>Caniformia</taxon>
        <taxon>Canidae</taxon>
        <taxon>Canis</taxon>
    </lineage>
</organism>
<accession>E2RJI4</accession>
<keyword id="KW-0007">Acetylation</keyword>
<keyword id="KW-0067">ATP-binding</keyword>
<keyword id="KW-0131">Cell cycle</keyword>
<keyword id="KW-0132">Cell division</keyword>
<keyword id="KW-0963">Cytoplasm</keyword>
<keyword id="KW-0206">Cytoskeleton</keyword>
<keyword id="KW-0418">Kinase</keyword>
<keyword id="KW-0498">Mitosis</keyword>
<keyword id="KW-0547">Nucleotide-binding</keyword>
<keyword id="KW-0539">Nucleus</keyword>
<keyword id="KW-0597">Phosphoprotein</keyword>
<keyword id="KW-1185">Reference proteome</keyword>
<keyword id="KW-0723">Serine/threonine-protein kinase</keyword>
<keyword id="KW-0808">Transferase</keyword>
<sequence>MEATAGSETESGGDTVTAECANRIPVPRPPSIEEFTIVKPISRGAFGKVYLGQKGGKLYAVKVVKKADMINKNMTHQVQAERDALALSKSPFIVHLYYSLQSANNVYLVMEYLIGGDVKSLLHIYGYFDEEMAVKYISEVALALDYLHRHGIIHRDLKPDNMLISNEGHIKLTDFGLSKITLNRDIDINMMDILTTPSMAKPRQDYSRTPGQVLSLISSLRFYTPAAEKDKDSANILSTHVFETSQLSQGLICPMSVDHRDTTPYSSKLLHSCLETVTSDPGMPVKCLTSNLLQSRRRLATSSASSQSHTFLSSVESECHSSPRWEKDCQESDDALGSTVMSWNIIEKSSCTKSTDAIETKGFNKKDFELTLSPIHNSSIIPATGSSCVNLAKKCFPGEVSWEARELDINNVNVATDTTRCVFHQSDQWVVDPSDGTEEYCGKRGFKRNSELVDSSPCQNIIQNKKNCIEHKSRNEKSNGYINQRTSLTNEVQDLKLSVCESQQSDCANKENMVNSSIDKQQTPEKSPIPMIAKNLMCELDEDCNKNNKKFLSSSFLGSDDERASKSICMDSDSSFPGISIMESSLERQSLDPDKSIRESSFEESNIEDLLAVSPSWQENPLPKDDENLAVQASSQKMLASSSDVLKTLTLSKRNAVAFRSFNSHINASNNSEPSKMSVTSLDAMDISCVYSGSYPMAITPSQKGISYVPYQQTPNQVKSETPYRTPKSVRRGAAPVDDARILGTPDYLAPELLLGRAHGPAVDWWALGVCLFEFLTGIPPFNDETSQQVFQNILKRDIPWPEGEEKLSDNAQNAVEILLTIDNAKRAGIKELKCHPLFSDVDWENLQHQTMPFIPQPDDETDTSYFEARNNAQHLTVSGFSL</sequence>
<evidence type="ECO:0000250" key="1"/>
<evidence type="ECO:0000250" key="2">
    <source>
        <dbReference type="UniProtKB" id="Q96GX5"/>
    </source>
</evidence>
<evidence type="ECO:0000255" key="3">
    <source>
        <dbReference type="PROSITE-ProRule" id="PRU00159"/>
    </source>
</evidence>
<evidence type="ECO:0000255" key="4">
    <source>
        <dbReference type="PROSITE-ProRule" id="PRU00618"/>
    </source>
</evidence>
<evidence type="ECO:0000255" key="5">
    <source>
        <dbReference type="PROSITE-ProRule" id="PRU10027"/>
    </source>
</evidence>
<evidence type="ECO:0000305" key="6"/>
<gene>
    <name type="primary">MASTL</name>
    <name type="synonym">GW</name>
    <name type="synonym">GWL</name>
</gene>
<proteinExistence type="inferred from homology"/>
<name>GWL_CANLF</name>